<reference key="1">
    <citation type="submission" date="2007-04" db="EMBL/GenBank/DDBJ databases">
        <title>Complete sequence of Pseudomonas mendocina ymp.</title>
        <authorList>
            <consortium name="US DOE Joint Genome Institute"/>
            <person name="Copeland A."/>
            <person name="Lucas S."/>
            <person name="Lapidus A."/>
            <person name="Barry K."/>
            <person name="Glavina del Rio T."/>
            <person name="Dalin E."/>
            <person name="Tice H."/>
            <person name="Pitluck S."/>
            <person name="Kiss H."/>
            <person name="Brettin T."/>
            <person name="Detter J.C."/>
            <person name="Bruce D."/>
            <person name="Han C."/>
            <person name="Schmutz J."/>
            <person name="Larimer F."/>
            <person name="Land M."/>
            <person name="Hauser L."/>
            <person name="Kyrpides N."/>
            <person name="Mikhailova N."/>
            <person name="Hersman L."/>
            <person name="Dubois J."/>
            <person name="Maurice P."/>
            <person name="Richardson P."/>
        </authorList>
    </citation>
    <scope>NUCLEOTIDE SEQUENCE [LARGE SCALE GENOMIC DNA]</scope>
    <source>
        <strain>ymp</strain>
    </source>
</reference>
<proteinExistence type="inferred from homology"/>
<comment type="function">
    <text evidence="1">Catalyzes the formation of 4-diphosphocytidyl-2-C-methyl-D-erythritol from CTP and 2-C-methyl-D-erythritol 4-phosphate (MEP).</text>
</comment>
<comment type="catalytic activity">
    <reaction evidence="1">
        <text>2-C-methyl-D-erythritol 4-phosphate + CTP + H(+) = 4-CDP-2-C-methyl-D-erythritol + diphosphate</text>
        <dbReference type="Rhea" id="RHEA:13429"/>
        <dbReference type="ChEBI" id="CHEBI:15378"/>
        <dbReference type="ChEBI" id="CHEBI:33019"/>
        <dbReference type="ChEBI" id="CHEBI:37563"/>
        <dbReference type="ChEBI" id="CHEBI:57823"/>
        <dbReference type="ChEBI" id="CHEBI:58262"/>
        <dbReference type="EC" id="2.7.7.60"/>
    </reaction>
</comment>
<comment type="pathway">
    <text evidence="1">Isoprenoid biosynthesis; isopentenyl diphosphate biosynthesis via DXP pathway; isopentenyl diphosphate from 1-deoxy-D-xylulose 5-phosphate: step 2/6.</text>
</comment>
<comment type="similarity">
    <text evidence="1">Belongs to the IspD/TarI cytidylyltransferase family. IspD subfamily.</text>
</comment>
<keyword id="KW-0414">Isoprene biosynthesis</keyword>
<keyword id="KW-0548">Nucleotidyltransferase</keyword>
<keyword id="KW-0808">Transferase</keyword>
<gene>
    <name evidence="1" type="primary">ispD</name>
    <name type="ordered locus">Pmen_3031</name>
</gene>
<accession>A4XWR9</accession>
<feature type="chain" id="PRO_1000202896" description="2-C-methyl-D-erythritol 4-phosphate cytidylyltransferase">
    <location>
        <begin position="1"/>
        <end position="235"/>
    </location>
</feature>
<feature type="site" description="Transition state stabilizer" evidence="1">
    <location>
        <position position="17"/>
    </location>
</feature>
<feature type="site" description="Transition state stabilizer" evidence="1">
    <location>
        <position position="24"/>
    </location>
</feature>
<feature type="site" description="Positions MEP for the nucleophilic attack" evidence="1">
    <location>
        <position position="158"/>
    </location>
</feature>
<feature type="site" description="Positions MEP for the nucleophilic attack" evidence="1">
    <location>
        <position position="214"/>
    </location>
</feature>
<protein>
    <recommendedName>
        <fullName evidence="1">2-C-methyl-D-erythritol 4-phosphate cytidylyltransferase</fullName>
        <ecNumber evidence="1">2.7.7.60</ecNumber>
    </recommendedName>
    <alternativeName>
        <fullName evidence="1">4-diphosphocytidyl-2C-methyl-D-erythritol synthase</fullName>
    </alternativeName>
    <alternativeName>
        <fullName evidence="1">MEP cytidylyltransferase</fullName>
        <shortName evidence="1">MCT</shortName>
    </alternativeName>
</protein>
<organism>
    <name type="scientific">Ectopseudomonas mendocina (strain ymp)</name>
    <name type="common">Pseudomonas mendocina</name>
    <dbReference type="NCBI Taxonomy" id="399739"/>
    <lineage>
        <taxon>Bacteria</taxon>
        <taxon>Pseudomonadati</taxon>
        <taxon>Pseudomonadota</taxon>
        <taxon>Gammaproteobacteria</taxon>
        <taxon>Pseudomonadales</taxon>
        <taxon>Pseudomonadaceae</taxon>
        <taxon>Ectopseudomonas</taxon>
    </lineage>
</organism>
<name>ISPD_ECTM1</name>
<sequence>MSTKFWLVVPAAGVGARMAADRPKQYLQVGGRCIIEHTLDCFLDHPDLLGAVVCLAVDDPYWPQLAVASDPRVRRAPGGRERADSVLAGLDALQAAGAGEQDWVLVHDAARPNLAREDLQRLLAVLADDPVGGLLAVPVRDTLKRADADGRVAQTVDRSQIWQAYTPQMFRLGALSQALRGALAAGVPITDEASALEWCGQSSRLVEGRADNLKITRPEDLAWLRQAWVERDRQR</sequence>
<dbReference type="EC" id="2.7.7.60" evidence="1"/>
<dbReference type="EMBL" id="CP000680">
    <property type="protein sequence ID" value="ABP85785.1"/>
    <property type="molecule type" value="Genomic_DNA"/>
</dbReference>
<dbReference type="SMR" id="A4XWR9"/>
<dbReference type="STRING" id="399739.Pmen_3031"/>
<dbReference type="KEGG" id="pmy:Pmen_3031"/>
<dbReference type="PATRIC" id="fig|399739.8.peg.3077"/>
<dbReference type="eggNOG" id="COG1211">
    <property type="taxonomic scope" value="Bacteria"/>
</dbReference>
<dbReference type="HOGENOM" id="CLU_061281_3_1_6"/>
<dbReference type="OrthoDB" id="9806837at2"/>
<dbReference type="UniPathway" id="UPA00056">
    <property type="reaction ID" value="UER00093"/>
</dbReference>
<dbReference type="GO" id="GO:0050518">
    <property type="term" value="F:2-C-methyl-D-erythritol 4-phosphate cytidylyltransferase activity"/>
    <property type="evidence" value="ECO:0007669"/>
    <property type="project" value="UniProtKB-UniRule"/>
</dbReference>
<dbReference type="GO" id="GO:0019288">
    <property type="term" value="P:isopentenyl diphosphate biosynthetic process, methylerythritol 4-phosphate pathway"/>
    <property type="evidence" value="ECO:0007669"/>
    <property type="project" value="UniProtKB-UniRule"/>
</dbReference>
<dbReference type="CDD" id="cd02516">
    <property type="entry name" value="CDP-ME_synthetase"/>
    <property type="match status" value="1"/>
</dbReference>
<dbReference type="FunFam" id="3.90.550.10:FF:000003">
    <property type="entry name" value="2-C-methyl-D-erythritol 4-phosphate cytidylyltransferase"/>
    <property type="match status" value="1"/>
</dbReference>
<dbReference type="Gene3D" id="3.90.550.10">
    <property type="entry name" value="Spore Coat Polysaccharide Biosynthesis Protein SpsA, Chain A"/>
    <property type="match status" value="1"/>
</dbReference>
<dbReference type="HAMAP" id="MF_00108">
    <property type="entry name" value="IspD"/>
    <property type="match status" value="1"/>
</dbReference>
<dbReference type="InterPro" id="IPR001228">
    <property type="entry name" value="IspD"/>
</dbReference>
<dbReference type="InterPro" id="IPR034683">
    <property type="entry name" value="IspD/TarI"/>
</dbReference>
<dbReference type="InterPro" id="IPR050088">
    <property type="entry name" value="IspD/TarI_cytidylyltransf_bact"/>
</dbReference>
<dbReference type="InterPro" id="IPR018294">
    <property type="entry name" value="ISPD_synthase_CS"/>
</dbReference>
<dbReference type="InterPro" id="IPR029044">
    <property type="entry name" value="Nucleotide-diphossugar_trans"/>
</dbReference>
<dbReference type="NCBIfam" id="TIGR00453">
    <property type="entry name" value="ispD"/>
    <property type="match status" value="1"/>
</dbReference>
<dbReference type="PANTHER" id="PTHR32125">
    <property type="entry name" value="2-C-METHYL-D-ERYTHRITOL 4-PHOSPHATE CYTIDYLYLTRANSFERASE, CHLOROPLASTIC"/>
    <property type="match status" value="1"/>
</dbReference>
<dbReference type="PANTHER" id="PTHR32125:SF4">
    <property type="entry name" value="2-C-METHYL-D-ERYTHRITOL 4-PHOSPHATE CYTIDYLYLTRANSFERASE, CHLOROPLASTIC"/>
    <property type="match status" value="1"/>
</dbReference>
<dbReference type="Pfam" id="PF01128">
    <property type="entry name" value="IspD"/>
    <property type="match status" value="1"/>
</dbReference>
<dbReference type="SUPFAM" id="SSF53448">
    <property type="entry name" value="Nucleotide-diphospho-sugar transferases"/>
    <property type="match status" value="1"/>
</dbReference>
<dbReference type="PROSITE" id="PS01295">
    <property type="entry name" value="ISPD"/>
    <property type="match status" value="1"/>
</dbReference>
<evidence type="ECO:0000255" key="1">
    <source>
        <dbReference type="HAMAP-Rule" id="MF_00108"/>
    </source>
</evidence>